<sequence length="214" mass="23231">MEFFLDTANLEEIRKAKAQGLMDGVTTNPTLLSREGGDWRKQAEAICAEVEGPVSLEVVGESAEEMIREAEDLASFGDNVVIKVPMTNEGLVATESLYRKGVKTNVTLVFSPLQALLAAKAGATYVSPFVGRLDGIAHDGMELIRQIRTIFDNYDFPTKILVASIRHPMHVLDSALIGADVATIPYSVISQLAAHPLTDKGLAAFNADWEKLTK</sequence>
<organism>
    <name type="scientific">Maridesulfovibrio salexigens (strain ATCC 14822 / DSM 2638 / NCIMB 8403 / VKM B-1763)</name>
    <name type="common">Desulfovibrio salexigens</name>
    <dbReference type="NCBI Taxonomy" id="526222"/>
    <lineage>
        <taxon>Bacteria</taxon>
        <taxon>Pseudomonadati</taxon>
        <taxon>Thermodesulfobacteriota</taxon>
        <taxon>Desulfovibrionia</taxon>
        <taxon>Desulfovibrionales</taxon>
        <taxon>Desulfovibrionaceae</taxon>
        <taxon>Maridesulfovibrio</taxon>
    </lineage>
</organism>
<protein>
    <recommendedName>
        <fullName evidence="1">Probable transaldolase</fullName>
        <ecNumber evidence="1">2.2.1.2</ecNumber>
    </recommendedName>
</protein>
<evidence type="ECO:0000255" key="1">
    <source>
        <dbReference type="HAMAP-Rule" id="MF_00494"/>
    </source>
</evidence>
<feature type="chain" id="PRO_1000206468" description="Probable transaldolase">
    <location>
        <begin position="1"/>
        <end position="214"/>
    </location>
</feature>
<feature type="active site" description="Schiff-base intermediate with substrate" evidence="1">
    <location>
        <position position="83"/>
    </location>
</feature>
<dbReference type="EC" id="2.2.1.2" evidence="1"/>
<dbReference type="EMBL" id="CP001649">
    <property type="protein sequence ID" value="ACS81061.1"/>
    <property type="molecule type" value="Genomic_DNA"/>
</dbReference>
<dbReference type="RefSeq" id="WP_015852877.1">
    <property type="nucleotide sequence ID" value="NC_012881.1"/>
</dbReference>
<dbReference type="SMR" id="C6C0W4"/>
<dbReference type="STRING" id="526222.Desal_3009"/>
<dbReference type="KEGG" id="dsa:Desal_3009"/>
<dbReference type="eggNOG" id="COG0176">
    <property type="taxonomic scope" value="Bacteria"/>
</dbReference>
<dbReference type="HOGENOM" id="CLU_079764_0_0_7"/>
<dbReference type="OrthoDB" id="9807051at2"/>
<dbReference type="UniPathway" id="UPA00115">
    <property type="reaction ID" value="UER00414"/>
</dbReference>
<dbReference type="Proteomes" id="UP000002601">
    <property type="component" value="Chromosome"/>
</dbReference>
<dbReference type="GO" id="GO:0005737">
    <property type="term" value="C:cytoplasm"/>
    <property type="evidence" value="ECO:0007669"/>
    <property type="project" value="UniProtKB-SubCell"/>
</dbReference>
<dbReference type="GO" id="GO:0016832">
    <property type="term" value="F:aldehyde-lyase activity"/>
    <property type="evidence" value="ECO:0007669"/>
    <property type="project" value="InterPro"/>
</dbReference>
<dbReference type="GO" id="GO:0004801">
    <property type="term" value="F:transaldolase activity"/>
    <property type="evidence" value="ECO:0007669"/>
    <property type="project" value="UniProtKB-UniRule"/>
</dbReference>
<dbReference type="GO" id="GO:0005975">
    <property type="term" value="P:carbohydrate metabolic process"/>
    <property type="evidence" value="ECO:0007669"/>
    <property type="project" value="InterPro"/>
</dbReference>
<dbReference type="GO" id="GO:0006098">
    <property type="term" value="P:pentose-phosphate shunt"/>
    <property type="evidence" value="ECO:0007669"/>
    <property type="project" value="UniProtKB-UniRule"/>
</dbReference>
<dbReference type="CDD" id="cd00956">
    <property type="entry name" value="Transaldolase_FSA"/>
    <property type="match status" value="1"/>
</dbReference>
<dbReference type="FunFam" id="3.20.20.70:FF:000018">
    <property type="entry name" value="Probable transaldolase"/>
    <property type="match status" value="1"/>
</dbReference>
<dbReference type="Gene3D" id="3.20.20.70">
    <property type="entry name" value="Aldolase class I"/>
    <property type="match status" value="1"/>
</dbReference>
<dbReference type="HAMAP" id="MF_00494">
    <property type="entry name" value="Transaldolase_3b"/>
    <property type="match status" value="1"/>
</dbReference>
<dbReference type="InterPro" id="IPR013785">
    <property type="entry name" value="Aldolase_TIM"/>
</dbReference>
<dbReference type="InterPro" id="IPR001585">
    <property type="entry name" value="TAL/FSA"/>
</dbReference>
<dbReference type="InterPro" id="IPR022999">
    <property type="entry name" value="Transaldolase_3B"/>
</dbReference>
<dbReference type="InterPro" id="IPR004731">
    <property type="entry name" value="Transaldolase_3B/F6P_aldolase"/>
</dbReference>
<dbReference type="InterPro" id="IPR018225">
    <property type="entry name" value="Transaldolase_AS"/>
</dbReference>
<dbReference type="InterPro" id="IPR033919">
    <property type="entry name" value="TSA/FSA_arc/bac"/>
</dbReference>
<dbReference type="NCBIfam" id="TIGR00875">
    <property type="entry name" value="fsa_talC_mipB"/>
    <property type="match status" value="1"/>
</dbReference>
<dbReference type="PANTHER" id="PTHR10683:SF40">
    <property type="entry name" value="FRUCTOSE-6-PHOSPHATE ALDOLASE 1-RELATED"/>
    <property type="match status" value="1"/>
</dbReference>
<dbReference type="PANTHER" id="PTHR10683">
    <property type="entry name" value="TRANSALDOLASE"/>
    <property type="match status" value="1"/>
</dbReference>
<dbReference type="Pfam" id="PF00923">
    <property type="entry name" value="TAL_FSA"/>
    <property type="match status" value="1"/>
</dbReference>
<dbReference type="SUPFAM" id="SSF51569">
    <property type="entry name" value="Aldolase"/>
    <property type="match status" value="1"/>
</dbReference>
<dbReference type="PROSITE" id="PS01054">
    <property type="entry name" value="TRANSALDOLASE_1"/>
    <property type="match status" value="1"/>
</dbReference>
<dbReference type="PROSITE" id="PS00958">
    <property type="entry name" value="TRANSALDOLASE_2"/>
    <property type="match status" value="1"/>
</dbReference>
<name>TAL_MARSD</name>
<reference key="1">
    <citation type="submission" date="2009-06" db="EMBL/GenBank/DDBJ databases">
        <title>Complete sequence of Desulfovibrio salexigens DSM 2638.</title>
        <authorList>
            <consortium name="US DOE Joint Genome Institute"/>
            <person name="Lucas S."/>
            <person name="Copeland A."/>
            <person name="Lapidus A."/>
            <person name="Glavina del Rio T."/>
            <person name="Tice H."/>
            <person name="Bruce D."/>
            <person name="Goodwin L."/>
            <person name="Pitluck S."/>
            <person name="Munk A.C."/>
            <person name="Brettin T."/>
            <person name="Detter J.C."/>
            <person name="Han C."/>
            <person name="Tapia R."/>
            <person name="Larimer F."/>
            <person name="Land M."/>
            <person name="Hauser L."/>
            <person name="Kyrpides N."/>
            <person name="Anderson I."/>
            <person name="Wall J.D."/>
            <person name="Arkin A.P."/>
            <person name="Dehal P."/>
            <person name="Chivian D."/>
            <person name="Giles B."/>
            <person name="Hazen T.C."/>
        </authorList>
    </citation>
    <scope>NUCLEOTIDE SEQUENCE [LARGE SCALE GENOMIC DNA]</scope>
    <source>
        <strain>ATCC 14822 / DSM 2638 / NCIMB 8403 / VKM B-1763</strain>
    </source>
</reference>
<keyword id="KW-0963">Cytoplasm</keyword>
<keyword id="KW-0570">Pentose shunt</keyword>
<keyword id="KW-1185">Reference proteome</keyword>
<keyword id="KW-0704">Schiff base</keyword>
<keyword id="KW-0808">Transferase</keyword>
<comment type="function">
    <text evidence="1">Transaldolase is important for the balance of metabolites in the pentose-phosphate pathway.</text>
</comment>
<comment type="catalytic activity">
    <reaction evidence="1">
        <text>D-sedoheptulose 7-phosphate + D-glyceraldehyde 3-phosphate = D-erythrose 4-phosphate + beta-D-fructose 6-phosphate</text>
        <dbReference type="Rhea" id="RHEA:17053"/>
        <dbReference type="ChEBI" id="CHEBI:16897"/>
        <dbReference type="ChEBI" id="CHEBI:57483"/>
        <dbReference type="ChEBI" id="CHEBI:57634"/>
        <dbReference type="ChEBI" id="CHEBI:59776"/>
        <dbReference type="EC" id="2.2.1.2"/>
    </reaction>
</comment>
<comment type="pathway">
    <text evidence="1">Carbohydrate degradation; pentose phosphate pathway; D-glyceraldehyde 3-phosphate and beta-D-fructose 6-phosphate from D-ribose 5-phosphate and D-xylulose 5-phosphate (non-oxidative stage): step 2/3.</text>
</comment>
<comment type="subcellular location">
    <subcellularLocation>
        <location evidence="1">Cytoplasm</location>
    </subcellularLocation>
</comment>
<comment type="similarity">
    <text evidence="1">Belongs to the transaldolase family. Type 3B subfamily.</text>
</comment>
<proteinExistence type="inferred from homology"/>
<accession>C6C0W4</accession>
<gene>
    <name evidence="1" type="primary">tal</name>
    <name type="ordered locus">Desal_3009</name>
</gene>